<organism>
    <name type="scientific">Mycobacterium tuberculosis (strain ATCC 25618 / H37Rv)</name>
    <dbReference type="NCBI Taxonomy" id="83332"/>
    <lineage>
        <taxon>Bacteria</taxon>
        <taxon>Bacillati</taxon>
        <taxon>Actinomycetota</taxon>
        <taxon>Actinomycetes</taxon>
        <taxon>Mycobacteriales</taxon>
        <taxon>Mycobacteriaceae</taxon>
        <taxon>Mycobacterium</taxon>
        <taxon>Mycobacterium tuberculosis complex</taxon>
    </lineage>
</organism>
<keyword id="KW-0903">Direct protein sequencing</keyword>
<evidence type="ECO:0000305" key="1"/>
<comment type="caution">
    <text evidence="1">We are unable to find this protein in the translation of the genome of strain H37Rv.</text>
</comment>
<sequence length="10" mass="1042">MATPLVDPAK</sequence>
<reference key="1">
    <citation type="submission" date="1997-12" db="UniProtKB">
        <authorList>
            <person name="Prasad H.K."/>
            <person name="Annapurna P.S."/>
        </authorList>
    </citation>
    <scope>PROTEIN SEQUENCE</scope>
    <source>
        <strain>ATCC 25618 / H37Rv</strain>
    </source>
</reference>
<protein>
    <recommendedName>
        <fullName>30 kDa non-secretory protein 1</fullName>
    </recommendedName>
</protein>
<name>NS1_MYCTU</name>
<proteinExistence type="evidence at protein level"/>
<feature type="chain" id="PRO_0000057958" description="30 kDa non-secretory protein 1">
    <location>
        <begin position="1" status="less than"/>
        <end position="10" status="greater than"/>
    </location>
</feature>
<feature type="non-terminal residue">
    <location>
        <position position="1"/>
    </location>
</feature>
<feature type="non-terminal residue">
    <location>
        <position position="10"/>
    </location>
</feature>
<accession>P81135</accession>